<proteinExistence type="inferred from homology"/>
<sequence length="546" mass="58361">MAKEIKYDMDARDLLKKGVDELANAVKVTLGPKGRNVIIEKKFGAPHITKDGVTVAKEVELTCPFENMGAQLVKEVASKTNDNAGDGTTTATVLAQSIIGVGLKNVTAGANPMDLKRGIDKAVAKVVESIANQAEAVGDKFEKIEHVAKISANGDEAIGKLIAEAMQRVKTEGVITVEEAKGTETTVDVVEGMQFDRGYISPYFVTDTEKMECQMENPYILIYDKKISVLKDLLPILEPTVQSGRPLLIIAEDIDSEALATLVVNRLRGSLKICAVKAPGFGDRRKAMLEDIAVLTGGTVISEEKGLKLEGATMDMLGTAEKITVDKDTTTIVNGAGDKEAIQARIGQIKIQMENTTSDYDKEKLQERLAKMAGGVAVLYVGAPSEVEMKEKKDRVDDALHATRAAIEEGTVPGGGVAYIRAIDALEGMKGDNEDETTGIEIVKRAIEEPLRQIVANAGKEGAVIVQKVKEGKGDFGYNARKDCFENLCEAGVIDPAKVTRVALENAASIAGMFLTTECVIAEKKEETPAMPPMNPGMGGGMGGMM</sequence>
<evidence type="ECO:0000255" key="1">
    <source>
        <dbReference type="HAMAP-Rule" id="MF_00600"/>
    </source>
</evidence>
<dbReference type="EC" id="5.6.1.7" evidence="1"/>
<dbReference type="EMBL" id="CP000140">
    <property type="protein sequence ID" value="ABR45474.1"/>
    <property type="molecule type" value="Genomic_DNA"/>
</dbReference>
<dbReference type="RefSeq" id="WP_005858786.1">
    <property type="nucleotide sequence ID" value="NZ_LR215978.1"/>
</dbReference>
<dbReference type="SMR" id="A6LIG0"/>
<dbReference type="STRING" id="435591.BDI_3787"/>
<dbReference type="PaxDb" id="435591-BDI_3787"/>
<dbReference type="GeneID" id="93523845"/>
<dbReference type="KEGG" id="pdi:BDI_3787"/>
<dbReference type="eggNOG" id="COG0459">
    <property type="taxonomic scope" value="Bacteria"/>
</dbReference>
<dbReference type="HOGENOM" id="CLU_016503_3_0_10"/>
<dbReference type="BioCyc" id="PDIS435591:G1G5A-3884-MONOMER"/>
<dbReference type="Proteomes" id="UP000000566">
    <property type="component" value="Chromosome"/>
</dbReference>
<dbReference type="GO" id="GO:0005737">
    <property type="term" value="C:cytoplasm"/>
    <property type="evidence" value="ECO:0007669"/>
    <property type="project" value="UniProtKB-SubCell"/>
</dbReference>
<dbReference type="GO" id="GO:0005524">
    <property type="term" value="F:ATP binding"/>
    <property type="evidence" value="ECO:0007669"/>
    <property type="project" value="UniProtKB-UniRule"/>
</dbReference>
<dbReference type="GO" id="GO:0140662">
    <property type="term" value="F:ATP-dependent protein folding chaperone"/>
    <property type="evidence" value="ECO:0007669"/>
    <property type="project" value="InterPro"/>
</dbReference>
<dbReference type="GO" id="GO:0016853">
    <property type="term" value="F:isomerase activity"/>
    <property type="evidence" value="ECO:0007669"/>
    <property type="project" value="UniProtKB-KW"/>
</dbReference>
<dbReference type="GO" id="GO:0051082">
    <property type="term" value="F:unfolded protein binding"/>
    <property type="evidence" value="ECO:0007669"/>
    <property type="project" value="UniProtKB-UniRule"/>
</dbReference>
<dbReference type="GO" id="GO:0042026">
    <property type="term" value="P:protein refolding"/>
    <property type="evidence" value="ECO:0007669"/>
    <property type="project" value="UniProtKB-UniRule"/>
</dbReference>
<dbReference type="CDD" id="cd03344">
    <property type="entry name" value="GroEL"/>
    <property type="match status" value="1"/>
</dbReference>
<dbReference type="FunFam" id="3.50.7.10:FF:000001">
    <property type="entry name" value="60 kDa chaperonin"/>
    <property type="match status" value="1"/>
</dbReference>
<dbReference type="Gene3D" id="3.50.7.10">
    <property type="entry name" value="GroEL"/>
    <property type="match status" value="1"/>
</dbReference>
<dbReference type="Gene3D" id="1.10.560.10">
    <property type="entry name" value="GroEL-like equatorial domain"/>
    <property type="match status" value="1"/>
</dbReference>
<dbReference type="Gene3D" id="3.30.260.10">
    <property type="entry name" value="TCP-1-like chaperonin intermediate domain"/>
    <property type="match status" value="1"/>
</dbReference>
<dbReference type="HAMAP" id="MF_00600">
    <property type="entry name" value="CH60"/>
    <property type="match status" value="1"/>
</dbReference>
<dbReference type="InterPro" id="IPR018370">
    <property type="entry name" value="Chaperonin_Cpn60_CS"/>
</dbReference>
<dbReference type="InterPro" id="IPR001844">
    <property type="entry name" value="Cpn60/GroEL"/>
</dbReference>
<dbReference type="InterPro" id="IPR002423">
    <property type="entry name" value="Cpn60/GroEL/TCP-1"/>
</dbReference>
<dbReference type="InterPro" id="IPR027409">
    <property type="entry name" value="GroEL-like_apical_dom_sf"/>
</dbReference>
<dbReference type="InterPro" id="IPR027413">
    <property type="entry name" value="GROEL-like_equatorial_sf"/>
</dbReference>
<dbReference type="InterPro" id="IPR027410">
    <property type="entry name" value="TCP-1-like_intermed_sf"/>
</dbReference>
<dbReference type="NCBIfam" id="TIGR02348">
    <property type="entry name" value="GroEL"/>
    <property type="match status" value="1"/>
</dbReference>
<dbReference type="NCBIfam" id="NF000592">
    <property type="entry name" value="PRK00013.1"/>
    <property type="match status" value="1"/>
</dbReference>
<dbReference type="NCBIfam" id="NF009487">
    <property type="entry name" value="PRK12849.1"/>
    <property type="match status" value="1"/>
</dbReference>
<dbReference type="NCBIfam" id="NF009488">
    <property type="entry name" value="PRK12850.1"/>
    <property type="match status" value="1"/>
</dbReference>
<dbReference type="NCBIfam" id="NF009489">
    <property type="entry name" value="PRK12851.1"/>
    <property type="match status" value="1"/>
</dbReference>
<dbReference type="PANTHER" id="PTHR45633">
    <property type="entry name" value="60 KDA HEAT SHOCK PROTEIN, MITOCHONDRIAL"/>
    <property type="match status" value="1"/>
</dbReference>
<dbReference type="Pfam" id="PF00118">
    <property type="entry name" value="Cpn60_TCP1"/>
    <property type="match status" value="1"/>
</dbReference>
<dbReference type="PRINTS" id="PR00298">
    <property type="entry name" value="CHAPERONIN60"/>
</dbReference>
<dbReference type="SUPFAM" id="SSF52029">
    <property type="entry name" value="GroEL apical domain-like"/>
    <property type="match status" value="1"/>
</dbReference>
<dbReference type="SUPFAM" id="SSF48592">
    <property type="entry name" value="GroEL equatorial domain-like"/>
    <property type="match status" value="1"/>
</dbReference>
<dbReference type="SUPFAM" id="SSF54849">
    <property type="entry name" value="GroEL-intermediate domain like"/>
    <property type="match status" value="1"/>
</dbReference>
<dbReference type="PROSITE" id="PS00296">
    <property type="entry name" value="CHAPERONINS_CPN60"/>
    <property type="match status" value="1"/>
</dbReference>
<reference key="1">
    <citation type="journal article" date="2007" name="PLoS Biol.">
        <title>Evolution of symbiotic bacteria in the distal human intestine.</title>
        <authorList>
            <person name="Xu J."/>
            <person name="Mahowald M.A."/>
            <person name="Ley R.E."/>
            <person name="Lozupone C.A."/>
            <person name="Hamady M."/>
            <person name="Martens E.C."/>
            <person name="Henrissat B."/>
            <person name="Coutinho P.M."/>
            <person name="Minx P."/>
            <person name="Latreille P."/>
            <person name="Cordum H."/>
            <person name="Van Brunt A."/>
            <person name="Kim K."/>
            <person name="Fulton R.S."/>
            <person name="Fulton L.A."/>
            <person name="Clifton S.W."/>
            <person name="Wilson R.K."/>
            <person name="Knight R.D."/>
            <person name="Gordon J.I."/>
        </authorList>
    </citation>
    <scope>NUCLEOTIDE SEQUENCE [LARGE SCALE GENOMIC DNA]</scope>
    <source>
        <strain>ATCC 8503 / DSM 20701 / CIP 104284 / JCM 5825 / NCTC 11152</strain>
    </source>
</reference>
<accession>A6LIG0</accession>
<protein>
    <recommendedName>
        <fullName evidence="1">Chaperonin GroEL</fullName>
        <ecNumber evidence="1">5.6.1.7</ecNumber>
    </recommendedName>
    <alternativeName>
        <fullName evidence="1">60 kDa chaperonin</fullName>
    </alternativeName>
    <alternativeName>
        <fullName evidence="1">Chaperonin-60</fullName>
        <shortName evidence="1">Cpn60</shortName>
    </alternativeName>
</protein>
<feature type="chain" id="PRO_1000025815" description="Chaperonin GroEL">
    <location>
        <begin position="1"/>
        <end position="546"/>
    </location>
</feature>
<feature type="binding site" evidence="1">
    <location>
        <begin position="29"/>
        <end position="32"/>
    </location>
    <ligand>
        <name>ATP</name>
        <dbReference type="ChEBI" id="CHEBI:30616"/>
    </ligand>
</feature>
<feature type="binding site" evidence="1">
    <location>
        <position position="50"/>
    </location>
    <ligand>
        <name>ATP</name>
        <dbReference type="ChEBI" id="CHEBI:30616"/>
    </ligand>
</feature>
<feature type="binding site" evidence="1">
    <location>
        <begin position="86"/>
        <end position="90"/>
    </location>
    <ligand>
        <name>ATP</name>
        <dbReference type="ChEBI" id="CHEBI:30616"/>
    </ligand>
</feature>
<feature type="binding site" evidence="1">
    <location>
        <position position="415"/>
    </location>
    <ligand>
        <name>ATP</name>
        <dbReference type="ChEBI" id="CHEBI:30616"/>
    </ligand>
</feature>
<feature type="binding site" evidence="1">
    <location>
        <position position="495"/>
    </location>
    <ligand>
        <name>ATP</name>
        <dbReference type="ChEBI" id="CHEBI:30616"/>
    </ligand>
</feature>
<comment type="function">
    <text evidence="1">Together with its co-chaperonin GroES, plays an essential role in assisting protein folding. The GroEL-GroES system forms a nano-cage that allows encapsulation of the non-native substrate proteins and provides a physical environment optimized to promote and accelerate protein folding.</text>
</comment>
<comment type="catalytic activity">
    <reaction evidence="1">
        <text>ATP + H2O + a folded polypeptide = ADP + phosphate + an unfolded polypeptide.</text>
        <dbReference type="EC" id="5.6.1.7"/>
    </reaction>
</comment>
<comment type="subunit">
    <text evidence="1">Forms a cylinder of 14 subunits composed of two heptameric rings stacked back-to-back. Interacts with the co-chaperonin GroES.</text>
</comment>
<comment type="subcellular location">
    <subcellularLocation>
        <location evidence="1">Cytoplasm</location>
    </subcellularLocation>
</comment>
<comment type="similarity">
    <text evidence="1">Belongs to the chaperonin (HSP60) family.</text>
</comment>
<organism>
    <name type="scientific">Parabacteroides distasonis (strain ATCC 8503 / DSM 20701 / CIP 104284 / JCM 5825 / NCTC 11152)</name>
    <dbReference type="NCBI Taxonomy" id="435591"/>
    <lineage>
        <taxon>Bacteria</taxon>
        <taxon>Pseudomonadati</taxon>
        <taxon>Bacteroidota</taxon>
        <taxon>Bacteroidia</taxon>
        <taxon>Bacteroidales</taxon>
        <taxon>Tannerellaceae</taxon>
        <taxon>Parabacteroides</taxon>
    </lineage>
</organism>
<keyword id="KW-0067">ATP-binding</keyword>
<keyword id="KW-0143">Chaperone</keyword>
<keyword id="KW-0963">Cytoplasm</keyword>
<keyword id="KW-0413">Isomerase</keyword>
<keyword id="KW-0547">Nucleotide-binding</keyword>
<keyword id="KW-1185">Reference proteome</keyword>
<gene>
    <name evidence="1" type="primary">groEL</name>
    <name evidence="1" type="synonym">groL</name>
    <name type="ordered locus">BDI_3787</name>
</gene>
<name>CH60_PARD8</name>